<sequence>MERFLRKYNISGDYANATRTFLAISPQWTCSHLKRNCLFNGMCVKQHFERAMIAATDAEEPAKAYKLVELAKEAMYDRETVWLQCFKSFSQPYEEDVEGKMKRCGAQLLEDYRKSGMMDEAVKQSALVNSERIRLDDSLSAMPYIYVPINNGQIVNPTFISRYRQIAYYFYNPDAADDWIDPNLFGIRGQHNQIKREVERQINTCPYTGYRGRVFQVMFLPIQLINFLRMDDFAKHFNRYASMAIQQYLRVGYAEEIRYVQQLFGKVPTGEFPLHQMMLMRRDLPTRDRSIVEARVRRSGDENWQSWLLPMIIIREGLDHQDRWEWFIDYMDRKHTCQLCYLKHSKQIPACSVIDVRASELTGCSPFKMVKIEEHVGNDSVFKTKLVRDEQIGRIGDHYYTTNCYTGAEALITTAIHIHRWIRGSGIWNDEGWQEGIFMLGRVLLRWELTKAQRSALLRLFCFVCYGYAPRADGTIPDWNNLGNFLDIILKGPELSEDEDERAYATMFEMVRCIITLCYAEKVHFAGFAAPACEGGEVINLAARMSQMWMEY</sequence>
<accession>P35933</accession>
<comment type="similarity">
    <text evidence="1">Belongs to the orbivirus non-structural protein NS1 family.</text>
</comment>
<organism>
    <name type="scientific">Bluetongue virus 13 (isolate USA)</name>
    <name type="common">BTV 13</name>
    <dbReference type="NCBI Taxonomy" id="33717"/>
    <lineage>
        <taxon>Viruses</taxon>
        <taxon>Riboviria</taxon>
        <taxon>Orthornavirae</taxon>
        <taxon>Duplornaviricota</taxon>
        <taxon>Resentoviricetes</taxon>
        <taxon>Reovirales</taxon>
        <taxon>Sedoreoviridae</taxon>
        <taxon>Orbivirus</taxon>
        <taxon>Bluetongue virus</taxon>
    </lineage>
</organism>
<reference key="1">
    <citation type="journal article" date="1993" name="Virology">
        <title>High-sequence conservation among the United States bluetongue viruses cognate M2 genes which encode the nonstructural NS1 tubule protein.</title>
        <authorList>
            <person name="Hwang G.-Y."/>
            <person name="Chiou J.-F."/>
            <person name="Yang Y.-Y."/>
            <person name="Li J.K.-K."/>
        </authorList>
    </citation>
    <scope>NUCLEOTIDE SEQUENCE</scope>
</reference>
<feature type="chain" id="PRO_0000222667" description="Non-structural protein NS1">
    <location>
        <begin position="1"/>
        <end position="552"/>
    </location>
</feature>
<organismHost>
    <name type="scientific">Antilocapra americana</name>
    <name type="common">Pronghorn</name>
    <dbReference type="NCBI Taxonomy" id="9891"/>
</organismHost>
<organismHost>
    <name type="scientific">Bos taurus</name>
    <name type="common">Bovine</name>
    <dbReference type="NCBI Taxonomy" id="9913"/>
</organismHost>
<organismHost>
    <name type="scientific">Capra hircus</name>
    <name type="common">Goat</name>
    <dbReference type="NCBI Taxonomy" id="9925"/>
</organismHost>
<organismHost>
    <name type="scientific">Culicoides variipennis</name>
    <name type="common">Biting midge</name>
    <dbReference type="NCBI Taxonomy" id="46212"/>
</organismHost>
<organismHost>
    <name type="scientific">Ovis aries</name>
    <name type="common">Sheep</name>
    <dbReference type="NCBI Taxonomy" id="9940"/>
</organismHost>
<proteinExistence type="inferred from homology"/>
<evidence type="ECO:0000305" key="1"/>
<dbReference type="EMBL" id="M97762">
    <property type="protein sequence ID" value="AAA02484.1"/>
    <property type="molecule type" value="Unassigned_DNA"/>
</dbReference>
<dbReference type="PIR" id="C44277">
    <property type="entry name" value="C44277"/>
</dbReference>
<dbReference type="SMR" id="P35933"/>
<dbReference type="InterPro" id="IPR002630">
    <property type="entry name" value="Orbi_NS1"/>
</dbReference>
<dbReference type="Pfam" id="PF01718">
    <property type="entry name" value="Orbi_NS1"/>
    <property type="match status" value="1"/>
</dbReference>
<protein>
    <recommendedName>
        <fullName>Non-structural protein NS1</fullName>
    </recommendedName>
</protein>
<name>VNS1_BTV13</name>
<gene>
    <name type="primary">Segment-5</name>
    <name type="synonym">M2</name>
</gene>